<comment type="function">
    <text evidence="1">RuBisCO catalyzes two reactions: the carboxylation of D-ribulose 1,5-bisphosphate, the primary event in carbon dioxide fixation, as well as the oxidative fragmentation of the pentose substrate in the photorespiration process. Both reactions occur simultaneously and in competition at the same active site.</text>
</comment>
<comment type="catalytic activity">
    <reaction evidence="1">
        <text>2 (2R)-3-phosphoglycerate + 2 H(+) = D-ribulose 1,5-bisphosphate + CO2 + H2O</text>
        <dbReference type="Rhea" id="RHEA:23124"/>
        <dbReference type="ChEBI" id="CHEBI:15377"/>
        <dbReference type="ChEBI" id="CHEBI:15378"/>
        <dbReference type="ChEBI" id="CHEBI:16526"/>
        <dbReference type="ChEBI" id="CHEBI:57870"/>
        <dbReference type="ChEBI" id="CHEBI:58272"/>
        <dbReference type="EC" id="4.1.1.39"/>
    </reaction>
</comment>
<comment type="catalytic activity">
    <reaction evidence="1">
        <text>D-ribulose 1,5-bisphosphate + O2 = 2-phosphoglycolate + (2R)-3-phosphoglycerate + 2 H(+)</text>
        <dbReference type="Rhea" id="RHEA:36631"/>
        <dbReference type="ChEBI" id="CHEBI:15378"/>
        <dbReference type="ChEBI" id="CHEBI:15379"/>
        <dbReference type="ChEBI" id="CHEBI:57870"/>
        <dbReference type="ChEBI" id="CHEBI:58033"/>
        <dbReference type="ChEBI" id="CHEBI:58272"/>
    </reaction>
</comment>
<comment type="cofactor">
    <cofactor evidence="1">
        <name>Mg(2+)</name>
        <dbReference type="ChEBI" id="CHEBI:18420"/>
    </cofactor>
    <text evidence="1">Binds 1 Mg(2+) ion per subunit.</text>
</comment>
<comment type="subunit">
    <text evidence="1">Heterohexadecamer of 8 large chains and 8 small chains; disulfide-linked. The disulfide link is formed within the large subunit homodimers.</text>
</comment>
<comment type="subcellular location">
    <subcellularLocation>
        <location>Plastid</location>
        <location>Chloroplast</location>
    </subcellularLocation>
</comment>
<comment type="PTM">
    <text evidence="1">The disulfide bond which can form in the large chain dimeric partners within the hexadecamer appears to be associated with oxidative stress and protein turnover.</text>
</comment>
<comment type="miscellaneous">
    <text evidence="1">The basic functional RuBisCO is composed of a large chain homodimer in a 'head-to-tail' conformation. In form I RuBisCO this homodimer is arranged in a barrel-like tetramer with the small subunits forming a tetrameric 'cap' on each end of the 'barrel'.</text>
</comment>
<comment type="similarity">
    <text evidence="1">Belongs to the RuBisCO large chain family. Type I subfamily.</text>
</comment>
<evidence type="ECO:0000255" key="1">
    <source>
        <dbReference type="HAMAP-Rule" id="MF_01338"/>
    </source>
</evidence>
<organism>
    <name type="scientific">Moringa oleifera</name>
    <name type="common">Horseradish tree</name>
    <name type="synonym">Moringa pterygosperma</name>
    <dbReference type="NCBI Taxonomy" id="3735"/>
    <lineage>
        <taxon>Eukaryota</taxon>
        <taxon>Viridiplantae</taxon>
        <taxon>Streptophyta</taxon>
        <taxon>Embryophyta</taxon>
        <taxon>Tracheophyta</taxon>
        <taxon>Spermatophyta</taxon>
        <taxon>Magnoliopsida</taxon>
        <taxon>eudicotyledons</taxon>
        <taxon>Gunneridae</taxon>
        <taxon>Pentapetalae</taxon>
        <taxon>rosids</taxon>
        <taxon>malvids</taxon>
        <taxon>Brassicales</taxon>
        <taxon>Moringaceae</taxon>
        <taxon>Moringa</taxon>
    </lineage>
</organism>
<gene>
    <name evidence="1" type="primary">rbcL</name>
</gene>
<keyword id="KW-0113">Calvin cycle</keyword>
<keyword id="KW-0120">Carbon dioxide fixation</keyword>
<keyword id="KW-0150">Chloroplast</keyword>
<keyword id="KW-1015">Disulfide bond</keyword>
<keyword id="KW-0456">Lyase</keyword>
<keyword id="KW-0460">Magnesium</keyword>
<keyword id="KW-0479">Metal-binding</keyword>
<keyword id="KW-0488">Methylation</keyword>
<keyword id="KW-0503">Monooxygenase</keyword>
<keyword id="KW-0560">Oxidoreductase</keyword>
<keyword id="KW-0601">Photorespiration</keyword>
<keyword id="KW-0602">Photosynthesis</keyword>
<keyword id="KW-0934">Plastid</keyword>
<accession>P48708</accession>
<feature type="chain" id="PRO_0000062533" description="Ribulose bisphosphate carboxylase large chain">
    <location>
        <begin position="1" status="less than"/>
        <end position="466"/>
    </location>
</feature>
<feature type="active site" description="Proton acceptor" evidence="1">
    <location>
        <position position="166"/>
    </location>
</feature>
<feature type="active site" description="Proton acceptor" evidence="1">
    <location>
        <position position="285"/>
    </location>
</feature>
<feature type="binding site" description="in homodimeric partner" evidence="1">
    <location>
        <position position="114"/>
    </location>
    <ligand>
        <name>substrate</name>
    </ligand>
</feature>
<feature type="binding site" evidence="1">
    <location>
        <position position="164"/>
    </location>
    <ligand>
        <name>substrate</name>
    </ligand>
</feature>
<feature type="binding site" evidence="1">
    <location>
        <position position="168"/>
    </location>
    <ligand>
        <name>substrate</name>
    </ligand>
</feature>
<feature type="binding site" description="via carbamate group" evidence="1">
    <location>
        <position position="192"/>
    </location>
    <ligand>
        <name>Mg(2+)</name>
        <dbReference type="ChEBI" id="CHEBI:18420"/>
    </ligand>
</feature>
<feature type="binding site" evidence="1">
    <location>
        <position position="194"/>
    </location>
    <ligand>
        <name>Mg(2+)</name>
        <dbReference type="ChEBI" id="CHEBI:18420"/>
    </ligand>
</feature>
<feature type="binding site" evidence="1">
    <location>
        <position position="195"/>
    </location>
    <ligand>
        <name>Mg(2+)</name>
        <dbReference type="ChEBI" id="CHEBI:18420"/>
    </ligand>
</feature>
<feature type="binding site" evidence="1">
    <location>
        <position position="286"/>
    </location>
    <ligand>
        <name>substrate</name>
    </ligand>
</feature>
<feature type="binding site" evidence="1">
    <location>
        <position position="318"/>
    </location>
    <ligand>
        <name>substrate</name>
    </ligand>
</feature>
<feature type="binding site" evidence="1">
    <location>
        <position position="370"/>
    </location>
    <ligand>
        <name>substrate</name>
    </ligand>
</feature>
<feature type="site" description="Transition state stabilizer" evidence="1">
    <location>
        <position position="325"/>
    </location>
</feature>
<feature type="modified residue" description="N6,N6,N6-trimethyllysine" evidence="1">
    <location>
        <position position="5"/>
    </location>
</feature>
<feature type="modified residue" description="N6-carboxylysine" evidence="1">
    <location>
        <position position="192"/>
    </location>
</feature>
<feature type="disulfide bond" description="Interchain; in linked form" evidence="1">
    <location>
        <position position="238"/>
    </location>
</feature>
<feature type="non-terminal residue">
    <location>
        <position position="1"/>
    </location>
</feature>
<geneLocation type="chloroplast"/>
<protein>
    <recommendedName>
        <fullName evidence="1">Ribulose bisphosphate carboxylase large chain</fullName>
        <shortName evidence="1">RuBisCO large subunit</shortName>
        <ecNumber evidence="1">4.1.1.39</ecNumber>
    </recommendedName>
</protein>
<name>RBL_MOROL</name>
<dbReference type="EC" id="4.1.1.39" evidence="1"/>
<dbReference type="EMBL" id="L11359">
    <property type="protein sequence ID" value="AAA84457.2"/>
    <property type="molecule type" value="Genomic_DNA"/>
</dbReference>
<dbReference type="SMR" id="P48708"/>
<dbReference type="GO" id="GO:0009507">
    <property type="term" value="C:chloroplast"/>
    <property type="evidence" value="ECO:0007669"/>
    <property type="project" value="UniProtKB-SubCell"/>
</dbReference>
<dbReference type="GO" id="GO:0000287">
    <property type="term" value="F:magnesium ion binding"/>
    <property type="evidence" value="ECO:0007669"/>
    <property type="project" value="InterPro"/>
</dbReference>
<dbReference type="GO" id="GO:0004497">
    <property type="term" value="F:monooxygenase activity"/>
    <property type="evidence" value="ECO:0007669"/>
    <property type="project" value="UniProtKB-KW"/>
</dbReference>
<dbReference type="GO" id="GO:0016984">
    <property type="term" value="F:ribulose-bisphosphate carboxylase activity"/>
    <property type="evidence" value="ECO:0007669"/>
    <property type="project" value="UniProtKB-EC"/>
</dbReference>
<dbReference type="GO" id="GO:0009853">
    <property type="term" value="P:photorespiration"/>
    <property type="evidence" value="ECO:0007669"/>
    <property type="project" value="UniProtKB-KW"/>
</dbReference>
<dbReference type="GO" id="GO:0019253">
    <property type="term" value="P:reductive pentose-phosphate cycle"/>
    <property type="evidence" value="ECO:0007669"/>
    <property type="project" value="UniProtKB-KW"/>
</dbReference>
<dbReference type="CDD" id="cd08212">
    <property type="entry name" value="RuBisCO_large_I"/>
    <property type="match status" value="1"/>
</dbReference>
<dbReference type="FunFam" id="3.20.20.110:FF:000001">
    <property type="entry name" value="Ribulose bisphosphate carboxylase large chain"/>
    <property type="match status" value="1"/>
</dbReference>
<dbReference type="FunFam" id="3.30.70.150:FF:000001">
    <property type="entry name" value="Ribulose bisphosphate carboxylase large chain"/>
    <property type="match status" value="1"/>
</dbReference>
<dbReference type="Gene3D" id="3.20.20.110">
    <property type="entry name" value="Ribulose bisphosphate carboxylase, large subunit, C-terminal domain"/>
    <property type="match status" value="1"/>
</dbReference>
<dbReference type="Gene3D" id="3.30.70.150">
    <property type="entry name" value="RuBisCO large subunit, N-terminal domain"/>
    <property type="match status" value="1"/>
</dbReference>
<dbReference type="HAMAP" id="MF_01338">
    <property type="entry name" value="RuBisCO_L_type1"/>
    <property type="match status" value="1"/>
</dbReference>
<dbReference type="InterPro" id="IPR033966">
    <property type="entry name" value="RuBisCO"/>
</dbReference>
<dbReference type="InterPro" id="IPR020878">
    <property type="entry name" value="RuBisCo_large_chain_AS"/>
</dbReference>
<dbReference type="InterPro" id="IPR000685">
    <property type="entry name" value="RuBisCO_lsu_C"/>
</dbReference>
<dbReference type="InterPro" id="IPR036376">
    <property type="entry name" value="RuBisCO_lsu_C_sf"/>
</dbReference>
<dbReference type="InterPro" id="IPR017443">
    <property type="entry name" value="RuBisCO_lsu_fd_N"/>
</dbReference>
<dbReference type="InterPro" id="IPR036422">
    <property type="entry name" value="RuBisCO_lsu_N_sf"/>
</dbReference>
<dbReference type="InterPro" id="IPR020888">
    <property type="entry name" value="RuBisCO_lsuI"/>
</dbReference>
<dbReference type="NCBIfam" id="NF003252">
    <property type="entry name" value="PRK04208.1"/>
    <property type="match status" value="1"/>
</dbReference>
<dbReference type="PANTHER" id="PTHR42704">
    <property type="entry name" value="RIBULOSE BISPHOSPHATE CARBOXYLASE"/>
    <property type="match status" value="1"/>
</dbReference>
<dbReference type="PANTHER" id="PTHR42704:SF16">
    <property type="entry name" value="RIBULOSE BISPHOSPHATE CARBOXYLASE LARGE CHAIN"/>
    <property type="match status" value="1"/>
</dbReference>
<dbReference type="Pfam" id="PF00016">
    <property type="entry name" value="RuBisCO_large"/>
    <property type="match status" value="1"/>
</dbReference>
<dbReference type="Pfam" id="PF02788">
    <property type="entry name" value="RuBisCO_large_N"/>
    <property type="match status" value="1"/>
</dbReference>
<dbReference type="SFLD" id="SFLDG01052">
    <property type="entry name" value="RuBisCO"/>
    <property type="match status" value="1"/>
</dbReference>
<dbReference type="SFLD" id="SFLDS00014">
    <property type="entry name" value="RuBisCO"/>
    <property type="match status" value="1"/>
</dbReference>
<dbReference type="SFLD" id="SFLDG00301">
    <property type="entry name" value="RuBisCO-like_proteins"/>
    <property type="match status" value="1"/>
</dbReference>
<dbReference type="SUPFAM" id="SSF51649">
    <property type="entry name" value="RuBisCo, C-terminal domain"/>
    <property type="match status" value="1"/>
</dbReference>
<dbReference type="SUPFAM" id="SSF54966">
    <property type="entry name" value="RuBisCO, large subunit, small (N-terminal) domain"/>
    <property type="match status" value="1"/>
</dbReference>
<dbReference type="PROSITE" id="PS00157">
    <property type="entry name" value="RUBISCO_LARGE"/>
    <property type="match status" value="1"/>
</dbReference>
<sequence>SVGFKAGVKDYKLTYYTPDYETKDTDILAAFRVTPQPGVPPEEAGAAVAAESSTGTWTTVWTDGLTSLDRYKGRCYHIEPIAGEENQFIAYVAYPLDLFEEGSVTNMFTSIVGNVFGFKALRALRLEDLRIPPAYSKTFQGPPHGIQVERDKLNKYGRPLLGCTIKPKLGLSAKNYGRAVYECLRGGLDFTKDDENVNSQPFMRWRDRFLFCAEAIYKAQAETGEIKGHYLNATAGTCEEMIKRAVFARELGAPIIMHDYLTGGFTANTSLAHYCRDNGLLLHIHRAMHAVIDRQKNHGMHFRVLAKALRLSGGDHIHAGTVVGKLEGEREITLGFVDLLRDDFVEKDRSRGIFFTQDWVSLPGVLPVASGGIHVWHMPALTEIFGDDSVLQFGGGTLGHPWGNAPGAVANRVALEACVQARNEGRDLAREGNEIIRKASKWSPELAAACEVWKEIKFEFPAVDTL</sequence>
<proteinExistence type="inferred from homology"/>
<reference key="1">
    <citation type="journal article" date="1993" name="Ann. Mo. Bot. Gard.">
        <title>Nucleotide sequences of the rbcL gene indicate monophyly of mustard oil plants.</title>
        <authorList>
            <person name="Rodman J.E."/>
            <person name="Price R.A."/>
            <person name="Karol K.G."/>
            <person name="Conti E."/>
            <person name="Sytsma K."/>
            <person name="Palmer J."/>
        </authorList>
        <dbReference type="AGRICOLA" id="IND93053815"/>
    </citation>
    <scope>NUCLEOTIDE SEQUENCE [GENOMIC DNA]</scope>
    <source>
        <tissue>Leaf</tissue>
    </source>
</reference>